<dbReference type="EMBL" id="BX572593">
    <property type="protein sequence ID" value="CAE25510.1"/>
    <property type="molecule type" value="Genomic_DNA"/>
</dbReference>
<dbReference type="RefSeq" id="WP_011155637.1">
    <property type="nucleotide sequence ID" value="NZ_CP116810.1"/>
</dbReference>
<dbReference type="SMR" id="Q6NDN9"/>
<dbReference type="STRING" id="258594.RPA0066"/>
<dbReference type="GeneID" id="66891067"/>
<dbReference type="eggNOG" id="COG0776">
    <property type="taxonomic scope" value="Bacteria"/>
</dbReference>
<dbReference type="HOGENOM" id="CLU_105066_2_1_5"/>
<dbReference type="PhylomeDB" id="Q6NDN9"/>
<dbReference type="GO" id="GO:0005694">
    <property type="term" value="C:chromosome"/>
    <property type="evidence" value="ECO:0007669"/>
    <property type="project" value="InterPro"/>
</dbReference>
<dbReference type="GO" id="GO:0005829">
    <property type="term" value="C:cytosol"/>
    <property type="evidence" value="ECO:0007669"/>
    <property type="project" value="TreeGrafter"/>
</dbReference>
<dbReference type="GO" id="GO:0003677">
    <property type="term" value="F:DNA binding"/>
    <property type="evidence" value="ECO:0007669"/>
    <property type="project" value="UniProtKB-UniRule"/>
</dbReference>
<dbReference type="GO" id="GO:0030527">
    <property type="term" value="F:structural constituent of chromatin"/>
    <property type="evidence" value="ECO:0007669"/>
    <property type="project" value="InterPro"/>
</dbReference>
<dbReference type="GO" id="GO:0006310">
    <property type="term" value="P:DNA recombination"/>
    <property type="evidence" value="ECO:0007669"/>
    <property type="project" value="UniProtKB-UniRule"/>
</dbReference>
<dbReference type="GO" id="GO:0006355">
    <property type="term" value="P:regulation of DNA-templated transcription"/>
    <property type="evidence" value="ECO:0007669"/>
    <property type="project" value="UniProtKB-UniRule"/>
</dbReference>
<dbReference type="GO" id="GO:0006417">
    <property type="term" value="P:regulation of translation"/>
    <property type="evidence" value="ECO:0007669"/>
    <property type="project" value="UniProtKB-UniRule"/>
</dbReference>
<dbReference type="CDD" id="cd13836">
    <property type="entry name" value="IHF_B"/>
    <property type="match status" value="1"/>
</dbReference>
<dbReference type="FunFam" id="4.10.520.10:FF:000008">
    <property type="entry name" value="Integration host factor subunit beta"/>
    <property type="match status" value="1"/>
</dbReference>
<dbReference type="Gene3D" id="4.10.520.10">
    <property type="entry name" value="IHF-like DNA-binding proteins"/>
    <property type="match status" value="1"/>
</dbReference>
<dbReference type="HAMAP" id="MF_00381">
    <property type="entry name" value="IHF_beta"/>
    <property type="match status" value="1"/>
</dbReference>
<dbReference type="InterPro" id="IPR000119">
    <property type="entry name" value="Hist_DNA-bd"/>
</dbReference>
<dbReference type="InterPro" id="IPR020816">
    <property type="entry name" value="Histone-like_DNA-bd_CS"/>
</dbReference>
<dbReference type="InterPro" id="IPR010992">
    <property type="entry name" value="IHF-like_DNA-bd_dom_sf"/>
</dbReference>
<dbReference type="InterPro" id="IPR005685">
    <property type="entry name" value="IHF_beta"/>
</dbReference>
<dbReference type="NCBIfam" id="TIGR00988">
    <property type="entry name" value="hip"/>
    <property type="match status" value="1"/>
</dbReference>
<dbReference type="NCBIfam" id="NF001222">
    <property type="entry name" value="PRK00199.1"/>
    <property type="match status" value="1"/>
</dbReference>
<dbReference type="PANTHER" id="PTHR33175">
    <property type="entry name" value="DNA-BINDING PROTEIN HU"/>
    <property type="match status" value="1"/>
</dbReference>
<dbReference type="PANTHER" id="PTHR33175:SF5">
    <property type="entry name" value="INTEGRATION HOST FACTOR SUBUNIT BETA"/>
    <property type="match status" value="1"/>
</dbReference>
<dbReference type="Pfam" id="PF00216">
    <property type="entry name" value="Bac_DNA_binding"/>
    <property type="match status" value="1"/>
</dbReference>
<dbReference type="PRINTS" id="PR01727">
    <property type="entry name" value="DNABINDINGHU"/>
</dbReference>
<dbReference type="SMART" id="SM00411">
    <property type="entry name" value="BHL"/>
    <property type="match status" value="1"/>
</dbReference>
<dbReference type="SUPFAM" id="SSF47729">
    <property type="entry name" value="IHF-like DNA-binding proteins"/>
    <property type="match status" value="1"/>
</dbReference>
<dbReference type="PROSITE" id="PS00045">
    <property type="entry name" value="HISTONE_LIKE"/>
    <property type="match status" value="1"/>
</dbReference>
<comment type="function">
    <text evidence="1">This protein is one of the two subunits of integration host factor, a specific DNA-binding protein that functions in genetic recombination as well as in transcriptional and translational control.</text>
</comment>
<comment type="subunit">
    <text evidence="1">Heterodimer of an alpha and a beta chain.</text>
</comment>
<comment type="similarity">
    <text evidence="1">Belongs to the bacterial histone-like protein family.</text>
</comment>
<evidence type="ECO:0000255" key="1">
    <source>
        <dbReference type="HAMAP-Rule" id="MF_00381"/>
    </source>
</evidence>
<evidence type="ECO:0000256" key="2">
    <source>
        <dbReference type="SAM" id="MobiDB-lite"/>
    </source>
</evidence>
<protein>
    <recommendedName>
        <fullName evidence="1">Integration host factor subunit beta</fullName>
        <shortName evidence="1">IHF-beta</shortName>
    </recommendedName>
</protein>
<reference key="1">
    <citation type="journal article" date="2004" name="Nat. Biotechnol.">
        <title>Complete genome sequence of the metabolically versatile photosynthetic bacterium Rhodopseudomonas palustris.</title>
        <authorList>
            <person name="Larimer F.W."/>
            <person name="Chain P."/>
            <person name="Hauser L."/>
            <person name="Lamerdin J.E."/>
            <person name="Malfatti S."/>
            <person name="Do L."/>
            <person name="Land M.L."/>
            <person name="Pelletier D.A."/>
            <person name="Beatty J.T."/>
            <person name="Lang A.S."/>
            <person name="Tabita F.R."/>
            <person name="Gibson J.L."/>
            <person name="Hanson T.E."/>
            <person name="Bobst C."/>
            <person name="Torres y Torres J.L."/>
            <person name="Peres C."/>
            <person name="Harrison F.H."/>
            <person name="Gibson J."/>
            <person name="Harwood C.S."/>
        </authorList>
    </citation>
    <scope>NUCLEOTIDE SEQUENCE [LARGE SCALE GENOMIC DNA]</scope>
    <source>
        <strain>ATCC BAA-98 / CGA009</strain>
    </source>
</reference>
<sequence length="104" mass="11674">MIKSELVQRIAEHNPHLYQRDVENIVNAILDEIVDALARGDRVELRGFGAFSVKHRPARAGRNPRTGAHVPVDQKTVPFFKTGKEMRERLNRDSGDDAPTSDTA</sequence>
<accession>Q6NDN9</accession>
<organism>
    <name type="scientific">Rhodopseudomonas palustris (strain ATCC BAA-98 / CGA009)</name>
    <dbReference type="NCBI Taxonomy" id="258594"/>
    <lineage>
        <taxon>Bacteria</taxon>
        <taxon>Pseudomonadati</taxon>
        <taxon>Pseudomonadota</taxon>
        <taxon>Alphaproteobacteria</taxon>
        <taxon>Hyphomicrobiales</taxon>
        <taxon>Nitrobacteraceae</taxon>
        <taxon>Rhodopseudomonas</taxon>
    </lineage>
</organism>
<name>IHFB_RHOPA</name>
<keyword id="KW-0233">DNA recombination</keyword>
<keyword id="KW-0238">DNA-binding</keyword>
<keyword id="KW-0804">Transcription</keyword>
<keyword id="KW-0805">Transcription regulation</keyword>
<keyword id="KW-0810">Translation regulation</keyword>
<proteinExistence type="inferred from homology"/>
<gene>
    <name evidence="1" type="primary">ihfB</name>
    <name evidence="1" type="synonym">himD</name>
    <name type="ordered locus">RPA0066</name>
</gene>
<feature type="chain" id="PRO_1000060644" description="Integration host factor subunit beta">
    <location>
        <begin position="1"/>
        <end position="104"/>
    </location>
</feature>
<feature type="region of interest" description="Disordered" evidence="2">
    <location>
        <begin position="83"/>
        <end position="104"/>
    </location>
</feature>
<feature type="compositionally biased region" description="Basic and acidic residues" evidence="2">
    <location>
        <begin position="83"/>
        <end position="95"/>
    </location>
</feature>